<name>FADB_KLEP3</name>
<comment type="function">
    <text evidence="1">Involved in the aerobic and anaerobic degradation of long-chain fatty acids via beta-oxidation cycle. Catalyzes the formation of 3-oxoacyl-CoA from enoyl-CoA via L-3-hydroxyacyl-CoA. It can also use D-3-hydroxyacyl-CoA and cis-3-enoyl-CoA as substrate.</text>
</comment>
<comment type="catalytic activity">
    <reaction evidence="1">
        <text>a (3S)-3-hydroxyacyl-CoA + NAD(+) = a 3-oxoacyl-CoA + NADH + H(+)</text>
        <dbReference type="Rhea" id="RHEA:22432"/>
        <dbReference type="ChEBI" id="CHEBI:15378"/>
        <dbReference type="ChEBI" id="CHEBI:57318"/>
        <dbReference type="ChEBI" id="CHEBI:57540"/>
        <dbReference type="ChEBI" id="CHEBI:57945"/>
        <dbReference type="ChEBI" id="CHEBI:90726"/>
        <dbReference type="EC" id="1.1.1.35"/>
    </reaction>
</comment>
<comment type="catalytic activity">
    <reaction evidence="1">
        <text>a (3S)-3-hydroxyacyl-CoA = a (2E)-enoyl-CoA + H2O</text>
        <dbReference type="Rhea" id="RHEA:16105"/>
        <dbReference type="ChEBI" id="CHEBI:15377"/>
        <dbReference type="ChEBI" id="CHEBI:57318"/>
        <dbReference type="ChEBI" id="CHEBI:58856"/>
        <dbReference type="EC" id="4.2.1.17"/>
    </reaction>
</comment>
<comment type="catalytic activity">
    <reaction evidence="1">
        <text>a 4-saturated-(3S)-3-hydroxyacyl-CoA = a (3E)-enoyl-CoA + H2O</text>
        <dbReference type="Rhea" id="RHEA:20724"/>
        <dbReference type="ChEBI" id="CHEBI:15377"/>
        <dbReference type="ChEBI" id="CHEBI:58521"/>
        <dbReference type="ChEBI" id="CHEBI:137480"/>
        <dbReference type="EC" id="4.2.1.17"/>
    </reaction>
</comment>
<comment type="catalytic activity">
    <reaction evidence="1">
        <text>(3S)-3-hydroxybutanoyl-CoA = (3R)-3-hydroxybutanoyl-CoA</text>
        <dbReference type="Rhea" id="RHEA:21760"/>
        <dbReference type="ChEBI" id="CHEBI:57315"/>
        <dbReference type="ChEBI" id="CHEBI:57316"/>
        <dbReference type="EC" id="5.1.2.3"/>
    </reaction>
</comment>
<comment type="catalytic activity">
    <reaction evidence="1">
        <text>a (3Z)-enoyl-CoA = a 4-saturated (2E)-enoyl-CoA</text>
        <dbReference type="Rhea" id="RHEA:45900"/>
        <dbReference type="ChEBI" id="CHEBI:85097"/>
        <dbReference type="ChEBI" id="CHEBI:85489"/>
        <dbReference type="EC" id="5.3.3.8"/>
    </reaction>
</comment>
<comment type="catalytic activity">
    <reaction evidence="1">
        <text>a (3E)-enoyl-CoA = a 4-saturated (2E)-enoyl-CoA</text>
        <dbReference type="Rhea" id="RHEA:45228"/>
        <dbReference type="ChEBI" id="CHEBI:58521"/>
        <dbReference type="ChEBI" id="CHEBI:85097"/>
        <dbReference type="EC" id="5.3.3.8"/>
    </reaction>
</comment>
<comment type="pathway">
    <text evidence="1">Lipid metabolism; fatty acid beta-oxidation.</text>
</comment>
<comment type="subunit">
    <text evidence="1">Heterotetramer of two alpha chains (FadB) and two beta chains (FadA).</text>
</comment>
<comment type="similarity">
    <text evidence="1">In the N-terminal section; belongs to the enoyl-CoA hydratase/isomerase family.</text>
</comment>
<comment type="similarity">
    <text evidence="1">In the C-terminal section; belongs to the 3-hydroxyacyl-CoA dehydrogenase family.</text>
</comment>
<protein>
    <recommendedName>
        <fullName evidence="1">Fatty acid oxidation complex subunit alpha</fullName>
    </recommendedName>
    <domain>
        <recommendedName>
            <fullName evidence="1">Enoyl-CoA hydratase/Delta(3)-cis-Delta(2)-trans-enoyl-CoA isomerase/3-hydroxybutyryl-CoA epimerase</fullName>
            <ecNumber evidence="1">4.2.1.17</ecNumber>
            <ecNumber evidence="1">5.1.2.3</ecNumber>
            <ecNumber evidence="1">5.3.3.8</ecNumber>
        </recommendedName>
    </domain>
    <domain>
        <recommendedName>
            <fullName evidence="1">3-hydroxyacyl-CoA dehydrogenase</fullName>
            <ecNumber evidence="1">1.1.1.35</ecNumber>
        </recommendedName>
    </domain>
</protein>
<evidence type="ECO:0000255" key="1">
    <source>
        <dbReference type="HAMAP-Rule" id="MF_01621"/>
    </source>
</evidence>
<organism>
    <name type="scientific">Klebsiella pneumoniae (strain 342)</name>
    <dbReference type="NCBI Taxonomy" id="507522"/>
    <lineage>
        <taxon>Bacteria</taxon>
        <taxon>Pseudomonadati</taxon>
        <taxon>Pseudomonadota</taxon>
        <taxon>Gammaproteobacteria</taxon>
        <taxon>Enterobacterales</taxon>
        <taxon>Enterobacteriaceae</taxon>
        <taxon>Klebsiella/Raoultella group</taxon>
        <taxon>Klebsiella</taxon>
        <taxon>Klebsiella pneumoniae complex</taxon>
    </lineage>
</organism>
<dbReference type="EC" id="4.2.1.17" evidence="1"/>
<dbReference type="EC" id="5.1.2.3" evidence="1"/>
<dbReference type="EC" id="5.3.3.8" evidence="1"/>
<dbReference type="EC" id="1.1.1.35" evidence="1"/>
<dbReference type="EMBL" id="CP000964">
    <property type="protein sequence ID" value="ACI11295.1"/>
    <property type="molecule type" value="Genomic_DNA"/>
</dbReference>
<dbReference type="SMR" id="B5XYH0"/>
<dbReference type="KEGG" id="kpe:KPK_5333"/>
<dbReference type="HOGENOM" id="CLU_009834_16_3_6"/>
<dbReference type="UniPathway" id="UPA00659"/>
<dbReference type="Proteomes" id="UP000001734">
    <property type="component" value="Chromosome"/>
</dbReference>
<dbReference type="GO" id="GO:0036125">
    <property type="term" value="C:fatty acid beta-oxidation multienzyme complex"/>
    <property type="evidence" value="ECO:0007669"/>
    <property type="project" value="InterPro"/>
</dbReference>
<dbReference type="GO" id="GO:0008692">
    <property type="term" value="F:3-hydroxybutyryl-CoA epimerase activity"/>
    <property type="evidence" value="ECO:0007669"/>
    <property type="project" value="UniProtKB-UniRule"/>
</dbReference>
<dbReference type="GO" id="GO:0004165">
    <property type="term" value="F:delta(3)-delta(2)-enoyl-CoA isomerase activity"/>
    <property type="evidence" value="ECO:0007669"/>
    <property type="project" value="UniProtKB-UniRule"/>
</dbReference>
<dbReference type="GO" id="GO:0004300">
    <property type="term" value="F:enoyl-CoA hydratase activity"/>
    <property type="evidence" value="ECO:0007669"/>
    <property type="project" value="UniProtKB-UniRule"/>
</dbReference>
<dbReference type="GO" id="GO:0016509">
    <property type="term" value="F:long-chain-3-hydroxyacyl-CoA dehydrogenase activity"/>
    <property type="evidence" value="ECO:0007669"/>
    <property type="project" value="TreeGrafter"/>
</dbReference>
<dbReference type="GO" id="GO:0070403">
    <property type="term" value="F:NAD+ binding"/>
    <property type="evidence" value="ECO:0007669"/>
    <property type="project" value="InterPro"/>
</dbReference>
<dbReference type="GO" id="GO:0006635">
    <property type="term" value="P:fatty acid beta-oxidation"/>
    <property type="evidence" value="ECO:0007669"/>
    <property type="project" value="UniProtKB-UniRule"/>
</dbReference>
<dbReference type="CDD" id="cd06558">
    <property type="entry name" value="crotonase-like"/>
    <property type="match status" value="1"/>
</dbReference>
<dbReference type="FunFam" id="1.10.1040.50:FF:000001">
    <property type="entry name" value="Fatty acid oxidation complex subunit alpha"/>
    <property type="match status" value="1"/>
</dbReference>
<dbReference type="FunFam" id="3.90.226.10:FF:000018">
    <property type="entry name" value="Fatty acid oxidation complex subunit alpha"/>
    <property type="match status" value="1"/>
</dbReference>
<dbReference type="FunFam" id="3.40.50.720:FF:000009">
    <property type="entry name" value="Fatty oxidation complex, alpha subunit"/>
    <property type="match status" value="1"/>
</dbReference>
<dbReference type="Gene3D" id="1.10.1040.50">
    <property type="match status" value="1"/>
</dbReference>
<dbReference type="Gene3D" id="3.90.226.10">
    <property type="entry name" value="2-enoyl-CoA Hydratase, Chain A, domain 1"/>
    <property type="match status" value="1"/>
</dbReference>
<dbReference type="Gene3D" id="3.40.50.720">
    <property type="entry name" value="NAD(P)-binding Rossmann-like Domain"/>
    <property type="match status" value="1"/>
</dbReference>
<dbReference type="HAMAP" id="MF_01621">
    <property type="entry name" value="FadB"/>
    <property type="match status" value="1"/>
</dbReference>
<dbReference type="InterPro" id="IPR006180">
    <property type="entry name" value="3-OHacyl-CoA_DH_CS"/>
</dbReference>
<dbReference type="InterPro" id="IPR006176">
    <property type="entry name" value="3-OHacyl-CoA_DH_NAD-bd"/>
</dbReference>
<dbReference type="InterPro" id="IPR006108">
    <property type="entry name" value="3HC_DH_C"/>
</dbReference>
<dbReference type="InterPro" id="IPR008927">
    <property type="entry name" value="6-PGluconate_DH-like_C_sf"/>
</dbReference>
<dbReference type="InterPro" id="IPR029045">
    <property type="entry name" value="ClpP/crotonase-like_dom_sf"/>
</dbReference>
<dbReference type="InterPro" id="IPR018376">
    <property type="entry name" value="Enoyl-CoA_hyd/isom_CS"/>
</dbReference>
<dbReference type="InterPro" id="IPR001753">
    <property type="entry name" value="Enoyl-CoA_hydra/iso"/>
</dbReference>
<dbReference type="InterPro" id="IPR050136">
    <property type="entry name" value="FA_oxidation_alpha_subunit"/>
</dbReference>
<dbReference type="InterPro" id="IPR012799">
    <property type="entry name" value="FadB"/>
</dbReference>
<dbReference type="InterPro" id="IPR036291">
    <property type="entry name" value="NAD(P)-bd_dom_sf"/>
</dbReference>
<dbReference type="NCBIfam" id="TIGR02437">
    <property type="entry name" value="FadB"/>
    <property type="match status" value="1"/>
</dbReference>
<dbReference type="NCBIfam" id="NF008727">
    <property type="entry name" value="PRK11730.1"/>
    <property type="match status" value="1"/>
</dbReference>
<dbReference type="PANTHER" id="PTHR43612">
    <property type="entry name" value="TRIFUNCTIONAL ENZYME SUBUNIT ALPHA"/>
    <property type="match status" value="1"/>
</dbReference>
<dbReference type="PANTHER" id="PTHR43612:SF3">
    <property type="entry name" value="TRIFUNCTIONAL ENZYME SUBUNIT ALPHA, MITOCHONDRIAL"/>
    <property type="match status" value="1"/>
</dbReference>
<dbReference type="Pfam" id="PF00725">
    <property type="entry name" value="3HCDH"/>
    <property type="match status" value="2"/>
</dbReference>
<dbReference type="Pfam" id="PF02737">
    <property type="entry name" value="3HCDH_N"/>
    <property type="match status" value="1"/>
</dbReference>
<dbReference type="Pfam" id="PF00378">
    <property type="entry name" value="ECH_1"/>
    <property type="match status" value="1"/>
</dbReference>
<dbReference type="SUPFAM" id="SSF48179">
    <property type="entry name" value="6-phosphogluconate dehydrogenase C-terminal domain-like"/>
    <property type="match status" value="2"/>
</dbReference>
<dbReference type="SUPFAM" id="SSF52096">
    <property type="entry name" value="ClpP/crotonase"/>
    <property type="match status" value="1"/>
</dbReference>
<dbReference type="SUPFAM" id="SSF51735">
    <property type="entry name" value="NAD(P)-binding Rossmann-fold domains"/>
    <property type="match status" value="1"/>
</dbReference>
<dbReference type="PROSITE" id="PS00067">
    <property type="entry name" value="3HCDH"/>
    <property type="match status" value="1"/>
</dbReference>
<dbReference type="PROSITE" id="PS00166">
    <property type="entry name" value="ENOYL_COA_HYDRATASE"/>
    <property type="match status" value="1"/>
</dbReference>
<accession>B5XYH0</accession>
<reference key="1">
    <citation type="journal article" date="2008" name="PLoS Genet.">
        <title>Complete genome sequence of the N2-fixing broad host range endophyte Klebsiella pneumoniae 342 and virulence predictions verified in mice.</title>
        <authorList>
            <person name="Fouts D.E."/>
            <person name="Tyler H.L."/>
            <person name="DeBoy R.T."/>
            <person name="Daugherty S."/>
            <person name="Ren Q."/>
            <person name="Badger J.H."/>
            <person name="Durkin A.S."/>
            <person name="Huot H."/>
            <person name="Shrivastava S."/>
            <person name="Kothari S."/>
            <person name="Dodson R.J."/>
            <person name="Mohamoud Y."/>
            <person name="Khouri H."/>
            <person name="Roesch L.F.W."/>
            <person name="Krogfelt K.A."/>
            <person name="Struve C."/>
            <person name="Triplett E.W."/>
            <person name="Methe B.A."/>
        </authorList>
    </citation>
    <scope>NUCLEOTIDE SEQUENCE [LARGE SCALE GENOMIC DNA]</scope>
    <source>
        <strain>342</strain>
    </source>
</reference>
<gene>
    <name evidence="1" type="primary">fadB</name>
    <name type="ordered locus">KPK_5333</name>
</gene>
<feature type="chain" id="PRO_1000186044" description="Fatty acid oxidation complex subunit alpha">
    <location>
        <begin position="1"/>
        <end position="729"/>
    </location>
</feature>
<feature type="region of interest" description="Enoyl-CoA hydratase/isomerase" evidence="1">
    <location>
        <begin position="1"/>
        <end position="189"/>
    </location>
</feature>
<feature type="region of interest" description="3-hydroxyacyl-CoA dehydrogenase" evidence="1">
    <location>
        <begin position="311"/>
        <end position="729"/>
    </location>
</feature>
<feature type="active site" description="For 3-hydroxyacyl-CoA dehydrogenase activity" evidence="1">
    <location>
        <position position="450"/>
    </location>
</feature>
<feature type="binding site" evidence="1">
    <location>
        <position position="296"/>
    </location>
    <ligand>
        <name>substrate</name>
    </ligand>
</feature>
<feature type="binding site" evidence="1">
    <location>
        <position position="324"/>
    </location>
    <ligand>
        <name>NAD(+)</name>
        <dbReference type="ChEBI" id="CHEBI:57540"/>
    </ligand>
</feature>
<feature type="binding site" evidence="1">
    <location>
        <position position="343"/>
    </location>
    <ligand>
        <name>NAD(+)</name>
        <dbReference type="ChEBI" id="CHEBI:57540"/>
    </ligand>
</feature>
<feature type="binding site" evidence="1">
    <location>
        <begin position="400"/>
        <end position="402"/>
    </location>
    <ligand>
        <name>NAD(+)</name>
        <dbReference type="ChEBI" id="CHEBI:57540"/>
    </ligand>
</feature>
<feature type="binding site" evidence="1">
    <location>
        <position position="407"/>
    </location>
    <ligand>
        <name>NAD(+)</name>
        <dbReference type="ChEBI" id="CHEBI:57540"/>
    </ligand>
</feature>
<feature type="binding site" evidence="1">
    <location>
        <position position="429"/>
    </location>
    <ligand>
        <name>NAD(+)</name>
        <dbReference type="ChEBI" id="CHEBI:57540"/>
    </ligand>
</feature>
<feature type="binding site" evidence="1">
    <location>
        <position position="453"/>
    </location>
    <ligand>
        <name>NAD(+)</name>
        <dbReference type="ChEBI" id="CHEBI:57540"/>
    </ligand>
</feature>
<feature type="binding site" evidence="1">
    <location>
        <position position="500"/>
    </location>
    <ligand>
        <name>substrate</name>
    </ligand>
</feature>
<feature type="binding site" evidence="1">
    <location>
        <position position="660"/>
    </location>
    <ligand>
        <name>substrate</name>
    </ligand>
</feature>
<feature type="site" description="Important for catalytic activity" evidence="1">
    <location>
        <position position="119"/>
    </location>
</feature>
<feature type="site" description="Important for catalytic activity" evidence="1">
    <location>
        <position position="139"/>
    </location>
</feature>
<sequence length="729" mass="79338">MLYKGDTLYLDWLEDGIAELVFDAPGSVNKLDTATVASLGHALDVLEKQNDLKGLLLRSEKAAFIVGADITEFLSLFLVPEEQLSQWLHFANSVFNRLEDLPVPTISAVNGYALGGGCECVLATDYRLATPDLRIGLPETKLGIMPGFGGSVRLPRLLGADSALEIIAAGKDVGADQALKIGLVDGVVAAEKLRDGALAILRQAINGDLDWKAKRQPKLEPLKLSKIEATMSFTIAKGMVAQTAGKHYPAPITAVKTIEAAARLGREEALVLENKSFVPLAHTNEARALVGIFLNDQYVKAKAKKLTKDVETPKHAAVLGAGIMGGGIAYQSAWKGVPVVMKDISDKSLTLGMTEAAKLLNKQLERGKIDGLKLAGVISTIQPTLEYSGFDRVDVVVEAVVENPKVKKAVLAETEAKVRPDTVLASNTSTIPISELASVLQRPENFCGMHFFNPVHRMPLVEVIRGEKTSDKTIAKVVAWASKMGKTPIVVNDCPGFFVNRVLFPYFAGFSQLLRDGADFRKVDKVMEKQFGWPMGPAYLLDVVGIDTAHHAQAVMAAGFPQRMQKDYRDAIDALFDANRFGQKNGLGFWRYKEDSKGKPKKEEDAAVDSLLADVSQPKRDFSDEEIIARMMIPMVNEVVRCLEEGIIASPAEADMALVYGLGFPPFHGGAFRWLDTIGSAKYLDMAQQYQHLGPLYEVPAGLRDKARHNEAYYPQVEPARPVGALKTA</sequence>
<proteinExistence type="inferred from homology"/>
<keyword id="KW-0276">Fatty acid metabolism</keyword>
<keyword id="KW-0413">Isomerase</keyword>
<keyword id="KW-0442">Lipid degradation</keyword>
<keyword id="KW-0443">Lipid metabolism</keyword>
<keyword id="KW-0456">Lyase</keyword>
<keyword id="KW-0511">Multifunctional enzyme</keyword>
<keyword id="KW-0520">NAD</keyword>
<keyword id="KW-0560">Oxidoreductase</keyword>